<accession>Q8YDZ4</accession>
<protein>
    <recommendedName>
        <fullName>Type IV secretion system protein virB4</fullName>
    </recommendedName>
</protein>
<feature type="chain" id="PRO_0000290170" description="Type IV secretion system protein virB4">
    <location>
        <begin position="1"/>
        <end position="831"/>
    </location>
</feature>
<feature type="binding site" evidence="1">
    <location>
        <begin position="457"/>
        <end position="464"/>
    </location>
    <ligand>
        <name>ATP</name>
        <dbReference type="ChEBI" id="CHEBI:30616"/>
    </ligand>
</feature>
<keyword id="KW-0067">ATP-binding</keyword>
<keyword id="KW-0547">Nucleotide-binding</keyword>
<keyword id="KW-0843">Virulence</keyword>
<name>VIRB4_BRUME</name>
<dbReference type="EMBL" id="AE008918">
    <property type="protein sequence ID" value="AAL53269.1"/>
    <property type="molecule type" value="Genomic_DNA"/>
</dbReference>
<dbReference type="PIR" id="AB3513">
    <property type="entry name" value="AB3513"/>
</dbReference>
<dbReference type="RefSeq" id="WP_004681223.1">
    <property type="nucleotide sequence ID" value="NC_003318.1"/>
</dbReference>
<dbReference type="SMR" id="Q8YDZ4"/>
<dbReference type="GeneID" id="29595594"/>
<dbReference type="KEGG" id="bme:BMEII0028"/>
<dbReference type="KEGG" id="bmel:DK63_2091"/>
<dbReference type="PATRIC" id="fig|224914.52.peg.2192"/>
<dbReference type="eggNOG" id="COG3451">
    <property type="taxonomic scope" value="Bacteria"/>
</dbReference>
<dbReference type="PhylomeDB" id="Q8YDZ4"/>
<dbReference type="Proteomes" id="UP000000419">
    <property type="component" value="Chromosome II"/>
</dbReference>
<dbReference type="GO" id="GO:0005524">
    <property type="term" value="F:ATP binding"/>
    <property type="evidence" value="ECO:0007669"/>
    <property type="project" value="UniProtKB-KW"/>
</dbReference>
<dbReference type="Gene3D" id="3.40.50.300">
    <property type="entry name" value="P-loop containing nucleotide triphosphate hydrolases"/>
    <property type="match status" value="1"/>
</dbReference>
<dbReference type="InterPro" id="IPR004346">
    <property type="entry name" value="CagE_TrbE_VirB"/>
</dbReference>
<dbReference type="InterPro" id="IPR018145">
    <property type="entry name" value="CagE_TrbE_VirB_cntrl_dom"/>
</dbReference>
<dbReference type="InterPro" id="IPR027417">
    <property type="entry name" value="P-loop_NTPase"/>
</dbReference>
<dbReference type="InterPro" id="IPR043964">
    <property type="entry name" value="P-loop_TraG"/>
</dbReference>
<dbReference type="InterPro" id="IPR051162">
    <property type="entry name" value="T4SS_component"/>
</dbReference>
<dbReference type="NCBIfam" id="TIGR00929">
    <property type="entry name" value="VirB4_CagE"/>
    <property type="match status" value="1"/>
</dbReference>
<dbReference type="PANTHER" id="PTHR30121:SF12">
    <property type="entry name" value="TYPE IV SECRETION SYSTEM PROTEIN CAGE"/>
    <property type="match status" value="1"/>
</dbReference>
<dbReference type="PANTHER" id="PTHR30121">
    <property type="entry name" value="UNCHARACTERIZED PROTEIN YJGR-RELATED"/>
    <property type="match status" value="1"/>
</dbReference>
<dbReference type="Pfam" id="PF03135">
    <property type="entry name" value="CagE_TrbE_VirB"/>
    <property type="match status" value="1"/>
</dbReference>
<dbReference type="Pfam" id="PF19044">
    <property type="entry name" value="P-loop_TraG"/>
    <property type="match status" value="1"/>
</dbReference>
<dbReference type="SUPFAM" id="SSF52540">
    <property type="entry name" value="P-loop containing nucleoside triphosphate hydrolases"/>
    <property type="match status" value="1"/>
</dbReference>
<comment type="similarity">
    <text evidence="2">Belongs to the TrbE/VirB4 family.</text>
</comment>
<reference key="1">
    <citation type="journal article" date="2002" name="Proc. Natl. Acad. Sci. U.S.A.">
        <title>The genome sequence of the facultative intracellular pathogen Brucella melitensis.</title>
        <authorList>
            <person name="DelVecchio V.G."/>
            <person name="Kapatral V."/>
            <person name="Redkar R.J."/>
            <person name="Patra G."/>
            <person name="Mujer C."/>
            <person name="Los T."/>
            <person name="Ivanova N."/>
            <person name="Anderson I."/>
            <person name="Bhattacharyya A."/>
            <person name="Lykidis A."/>
            <person name="Reznik G."/>
            <person name="Jablonski L."/>
            <person name="Larsen N."/>
            <person name="D'Souza M."/>
            <person name="Bernal A."/>
            <person name="Mazur M."/>
            <person name="Goltsman E."/>
            <person name="Selkov E."/>
            <person name="Elzer P.H."/>
            <person name="Hagius S."/>
            <person name="O'Callaghan D."/>
            <person name="Letesson J.-J."/>
            <person name="Haselkorn R."/>
            <person name="Kyrpides N.C."/>
            <person name="Overbeek R."/>
        </authorList>
    </citation>
    <scope>NUCLEOTIDE SEQUENCE [LARGE SCALE GENOMIC DNA]</scope>
    <source>
        <strain>ATCC 23456 / CCUG 17765 / NCTC 10094 / 16M</strain>
    </source>
</reference>
<organism>
    <name type="scientific">Brucella melitensis biotype 1 (strain ATCC 23456 / CCUG 17765 / NCTC 10094 / 16M)</name>
    <dbReference type="NCBI Taxonomy" id="224914"/>
    <lineage>
        <taxon>Bacteria</taxon>
        <taxon>Pseudomonadati</taxon>
        <taxon>Pseudomonadota</taxon>
        <taxon>Alphaproteobacteria</taxon>
        <taxon>Hyphomicrobiales</taxon>
        <taxon>Brucellaceae</taxon>
        <taxon>Brucella/Ochrobactrum group</taxon>
        <taxon>Brucella</taxon>
    </lineage>
</organism>
<sequence>MGAQSKYAQQLNNERSLAPFIPFRSQVGPTTVITRDGDFVRTWRIAGLAFETQDKEKLLIRKDQLNTLFRAIASNNVALWSHNVRRRTWDHLKSFFSNPFCDALDKKYYGSFSGYRMMSNELYLTVIYRPVPAKISRLFNVAVHRSHAEILQEQKLAIRKLDEIGNQIETSLRRYGGDDGRGIEVLSTYEDKHGALCSQQLEFYNFLLSGEWQKVRVPSCPLDEYLGTGWVYAGTETIEIRTASATRYARGIDFKDYANHTEPGILNGLMYSDYEYVITQSFSFMTKRDGKEFLTRQKQRLQNTEDGSASQIMEMDIAIDQLGRGDFVMGEYHYSLLVFAEDMETVRHNTSHAMNILQDNGFLATVIATATDAAFYAQLPCNWRYRPRVAGLTSLNFAGLSCFHNFRAGKRDGNPWGQALTLLKTPSGQPAYLNFHYSKGDEDNFDKKLLGNTRIIGQSGAGKTVLMNFCLAQAQKYLHNAPMGMCNVFFDKDQGAKGTILAIGGKYLAIRNGEPTGFNPFQMEPTAGNILFLEKLVQVLVSRDGQHVTTTDESRISHAIRTVMRMRPELRRLSTVLQNVTEGSDRQDRENSVAKRLAKWCFDDGTGKRGTFWWVLDCPQDQIDFNTHSNYGFDGTDFLDNADVRTPISMYLLHRMELAIDGRRFIYWMDEAWKWVDDEAFSEFANNKQLTIRKQNGLGVFATQMPSSLLNSKVASALVQQVATEIYLPNPKADYHEYTDGFKVTNEEFDIIRSMSEESRMFLVKQGHHSMICRLELNGFDDELAILSGSSDNNELLDQVIAEVGDDPSVWLPVFQERRKARIASSKSTGR</sequence>
<proteinExistence type="inferred from homology"/>
<evidence type="ECO:0000255" key="1"/>
<evidence type="ECO:0000305" key="2"/>
<gene>
    <name type="primary">virB4</name>
    <name type="ordered locus">BMEII0028</name>
</gene>